<feature type="chain" id="PRO_1000138729" description="Protein-methionine-sulfoxide reductase heme-binding subunit MsrQ">
    <location>
        <begin position="1"/>
        <end position="211"/>
    </location>
</feature>
<feature type="transmembrane region" description="Helical" evidence="1">
    <location>
        <begin position="10"/>
        <end position="30"/>
    </location>
</feature>
<feature type="transmembrane region" description="Helical" evidence="1">
    <location>
        <begin position="82"/>
        <end position="102"/>
    </location>
</feature>
<feature type="transmembrane region" description="Helical" evidence="1">
    <location>
        <begin position="116"/>
        <end position="136"/>
    </location>
</feature>
<feature type="transmembrane region" description="Helical" evidence="1">
    <location>
        <begin position="153"/>
        <end position="173"/>
    </location>
</feature>
<reference key="1">
    <citation type="journal article" date="2011" name="Proc. Natl. Acad. Sci. U.S.A.">
        <title>Genomic anatomy of Escherichia coli O157:H7 outbreaks.</title>
        <authorList>
            <person name="Eppinger M."/>
            <person name="Mammel M.K."/>
            <person name="Leclerc J.E."/>
            <person name="Ravel J."/>
            <person name="Cebula T.A."/>
        </authorList>
    </citation>
    <scope>NUCLEOTIDE SEQUENCE [LARGE SCALE GENOMIC DNA]</scope>
    <source>
        <strain>EC4115 / EHEC</strain>
    </source>
</reference>
<evidence type="ECO:0000255" key="1">
    <source>
        <dbReference type="HAMAP-Rule" id="MF_01207"/>
    </source>
</evidence>
<gene>
    <name evidence="1" type="primary">msrQ</name>
    <name type="ordered locus">ECH74115_2751</name>
</gene>
<accession>B5YSJ8</accession>
<dbReference type="EMBL" id="CP001164">
    <property type="protein sequence ID" value="ACI36087.1"/>
    <property type="molecule type" value="Genomic_DNA"/>
</dbReference>
<dbReference type="RefSeq" id="WP_001240083.1">
    <property type="nucleotide sequence ID" value="NC_011353.1"/>
</dbReference>
<dbReference type="SMR" id="B5YSJ8"/>
<dbReference type="KEGG" id="ecf:ECH74115_2751"/>
<dbReference type="HOGENOM" id="CLU_080662_0_1_6"/>
<dbReference type="GO" id="GO:0005886">
    <property type="term" value="C:plasma membrane"/>
    <property type="evidence" value="ECO:0007669"/>
    <property type="project" value="UniProtKB-SubCell"/>
</dbReference>
<dbReference type="GO" id="GO:0009055">
    <property type="term" value="F:electron transfer activity"/>
    <property type="evidence" value="ECO:0007669"/>
    <property type="project" value="UniProtKB-UniRule"/>
</dbReference>
<dbReference type="GO" id="GO:0010181">
    <property type="term" value="F:FMN binding"/>
    <property type="evidence" value="ECO:0007669"/>
    <property type="project" value="UniProtKB-UniRule"/>
</dbReference>
<dbReference type="GO" id="GO:0020037">
    <property type="term" value="F:heme binding"/>
    <property type="evidence" value="ECO:0007669"/>
    <property type="project" value="UniProtKB-UniRule"/>
</dbReference>
<dbReference type="GO" id="GO:0046872">
    <property type="term" value="F:metal ion binding"/>
    <property type="evidence" value="ECO:0007669"/>
    <property type="project" value="UniProtKB-KW"/>
</dbReference>
<dbReference type="GO" id="GO:0016679">
    <property type="term" value="F:oxidoreductase activity, acting on diphenols and related substances as donors"/>
    <property type="evidence" value="ECO:0007669"/>
    <property type="project" value="TreeGrafter"/>
</dbReference>
<dbReference type="GO" id="GO:0030091">
    <property type="term" value="P:protein repair"/>
    <property type="evidence" value="ECO:0007669"/>
    <property type="project" value="UniProtKB-UniRule"/>
</dbReference>
<dbReference type="HAMAP" id="MF_01207">
    <property type="entry name" value="MsrQ"/>
    <property type="match status" value="1"/>
</dbReference>
<dbReference type="InterPro" id="IPR013130">
    <property type="entry name" value="Fe3_Rdtase_TM_dom"/>
</dbReference>
<dbReference type="InterPro" id="IPR022837">
    <property type="entry name" value="MsrQ-like"/>
</dbReference>
<dbReference type="NCBIfam" id="NF003830">
    <property type="entry name" value="PRK05419.1-1"/>
    <property type="match status" value="1"/>
</dbReference>
<dbReference type="NCBIfam" id="NF003831">
    <property type="entry name" value="PRK05419.1-2"/>
    <property type="match status" value="1"/>
</dbReference>
<dbReference type="NCBIfam" id="NF003832">
    <property type="entry name" value="PRK05419.1-4"/>
    <property type="match status" value="1"/>
</dbReference>
<dbReference type="PANTHER" id="PTHR36964">
    <property type="entry name" value="PROTEIN-METHIONINE-SULFOXIDE REDUCTASE HEME-BINDING SUBUNIT MSRQ"/>
    <property type="match status" value="1"/>
</dbReference>
<dbReference type="PANTHER" id="PTHR36964:SF1">
    <property type="entry name" value="PROTEIN-METHIONINE-SULFOXIDE REDUCTASE HEME-BINDING SUBUNIT MSRQ"/>
    <property type="match status" value="1"/>
</dbReference>
<dbReference type="Pfam" id="PF01794">
    <property type="entry name" value="Ferric_reduct"/>
    <property type="match status" value="1"/>
</dbReference>
<name>MSRQ_ECO5E</name>
<proteinExistence type="inferred from homology"/>
<protein>
    <recommendedName>
        <fullName evidence="1">Protein-methionine-sulfoxide reductase heme-binding subunit MsrQ</fullName>
    </recommendedName>
    <alternativeName>
        <fullName evidence="1">Flavocytochrome MsrQ</fullName>
    </alternativeName>
</protein>
<keyword id="KW-0997">Cell inner membrane</keyword>
<keyword id="KW-1003">Cell membrane</keyword>
<keyword id="KW-0249">Electron transport</keyword>
<keyword id="KW-0285">Flavoprotein</keyword>
<keyword id="KW-0288">FMN</keyword>
<keyword id="KW-0349">Heme</keyword>
<keyword id="KW-0408">Iron</keyword>
<keyword id="KW-0472">Membrane</keyword>
<keyword id="KW-0479">Metal-binding</keyword>
<keyword id="KW-0812">Transmembrane</keyword>
<keyword id="KW-1133">Transmembrane helix</keyword>
<keyword id="KW-0813">Transport</keyword>
<comment type="function">
    <text evidence="1">Part of the MsrPQ system that repairs oxidized periplasmic proteins containing methionine sulfoxide residues (Met-O), using respiratory chain electrons. Thus protects these proteins from oxidative-stress damage caused by reactive species of oxygen and chlorine generated by the host defense mechanisms. MsrPQ is essential for the maintenance of envelope integrity under bleach stress, rescuing a wide series of structurally unrelated periplasmic proteins from methionine oxidation, including the primary periplasmic chaperone SurA and the lipoprotein Pal. MsrQ provides electrons for reduction to the reductase catalytic subunit MsrP, using the quinone pool of the respiratory chain.</text>
</comment>
<comment type="cofactor">
    <cofactor evidence="1">
        <name>FMN</name>
        <dbReference type="ChEBI" id="CHEBI:58210"/>
    </cofactor>
    <text evidence="1">Binds 1 FMN per subunit.</text>
</comment>
<comment type="cofactor">
    <cofactor evidence="1">
        <name>heme b</name>
        <dbReference type="ChEBI" id="CHEBI:60344"/>
    </cofactor>
    <text evidence="1">Binds 1 heme b (iron(II)-protoporphyrin IX) group per subunit.</text>
</comment>
<comment type="subunit">
    <text evidence="1">Heterodimer of a catalytic subunit (MsrP) and a heme-binding subunit (MsrQ).</text>
</comment>
<comment type="subcellular location">
    <subcellularLocation>
        <location evidence="1">Cell inner membrane</location>
        <topology evidence="1">Multi-pass membrane protein</topology>
    </subcellularLocation>
</comment>
<comment type="similarity">
    <text evidence="1">Belongs to the MsrQ family.</text>
</comment>
<sequence>MRLTAKQVTWLKVCLHLAGLLPFLWLVWAINHGGLGADPVKDIQHFTGRTALKFLLATLLITPLARYAKQPLLIRTRRLLGLWCFAWATLHLTSYALLELGVNNLALLGKELITRPYLTLGIISWIILLALAFTSTQAMQRKLGKHWQQLHNFVYLVAILAPIHYLWSVKIISPQPLIYAGLAVLLLALRYKKSRSLFNRLRKQVHNKLSV</sequence>
<organism>
    <name type="scientific">Escherichia coli O157:H7 (strain EC4115 / EHEC)</name>
    <dbReference type="NCBI Taxonomy" id="444450"/>
    <lineage>
        <taxon>Bacteria</taxon>
        <taxon>Pseudomonadati</taxon>
        <taxon>Pseudomonadota</taxon>
        <taxon>Gammaproteobacteria</taxon>
        <taxon>Enterobacterales</taxon>
        <taxon>Enterobacteriaceae</taxon>
        <taxon>Escherichia</taxon>
    </lineage>
</organism>